<dbReference type="EMBL" id="AM180355">
    <property type="protein sequence ID" value="CAJ67300.1"/>
    <property type="molecule type" value="Genomic_DNA"/>
</dbReference>
<dbReference type="RefSeq" id="WP_003434723.1">
    <property type="nucleotide sequence ID" value="NZ_JAUPES010000001.1"/>
</dbReference>
<dbReference type="RefSeq" id="YP_001086945.1">
    <property type="nucleotide sequence ID" value="NC_009089.1"/>
</dbReference>
<dbReference type="SMR" id="Q188R7"/>
<dbReference type="STRING" id="272563.CD630_04720"/>
<dbReference type="DNASU" id="4914243"/>
<dbReference type="EnsemblBacteria" id="CAJ67300">
    <property type="protein sequence ID" value="CAJ67300"/>
    <property type="gene ID" value="CD630_04720"/>
</dbReference>
<dbReference type="KEGG" id="cdf:CD630_04720"/>
<dbReference type="KEGG" id="pdc:CDIF630_00600"/>
<dbReference type="PATRIC" id="fig|272563.120.peg.497"/>
<dbReference type="eggNOG" id="COG0655">
    <property type="taxonomic scope" value="Bacteria"/>
</dbReference>
<dbReference type="OrthoDB" id="6398207at2"/>
<dbReference type="PhylomeDB" id="Q188R7"/>
<dbReference type="BioCyc" id="PDIF272563:G12WB-584-MONOMER"/>
<dbReference type="Proteomes" id="UP000001978">
    <property type="component" value="Chromosome"/>
</dbReference>
<dbReference type="GO" id="GO:0051539">
    <property type="term" value="F:4 iron, 4 sulfur cluster binding"/>
    <property type="evidence" value="ECO:0007669"/>
    <property type="project" value="UniProtKB-KW"/>
</dbReference>
<dbReference type="GO" id="GO:0046872">
    <property type="term" value="F:metal ion binding"/>
    <property type="evidence" value="ECO:0007669"/>
    <property type="project" value="UniProtKB-KW"/>
</dbReference>
<dbReference type="GO" id="GO:0016491">
    <property type="term" value="F:oxidoreductase activity"/>
    <property type="evidence" value="ECO:0007669"/>
    <property type="project" value="InterPro"/>
</dbReference>
<dbReference type="Gene3D" id="3.40.50.360">
    <property type="match status" value="1"/>
</dbReference>
<dbReference type="InterPro" id="IPR029039">
    <property type="entry name" value="Flavoprotein-like_sf"/>
</dbReference>
<dbReference type="InterPro" id="IPR005025">
    <property type="entry name" value="FMN_Rdtase-like_dom"/>
</dbReference>
<dbReference type="InterPro" id="IPR051796">
    <property type="entry name" value="ISF_SsuE-like"/>
</dbReference>
<dbReference type="PANTHER" id="PTHR43278">
    <property type="entry name" value="NAD(P)H-DEPENDENT FMN-CONTAINING OXIDOREDUCTASE YWQN-RELATED"/>
    <property type="match status" value="1"/>
</dbReference>
<dbReference type="PANTHER" id="PTHR43278:SF4">
    <property type="entry name" value="NAD(P)H-DEPENDENT FMN-CONTAINING OXIDOREDUCTASE YWQN-RELATED"/>
    <property type="match status" value="1"/>
</dbReference>
<dbReference type="Pfam" id="PF03358">
    <property type="entry name" value="FMN_red"/>
    <property type="match status" value="1"/>
</dbReference>
<dbReference type="SUPFAM" id="SSF52218">
    <property type="entry name" value="Flavoproteins"/>
    <property type="match status" value="1"/>
</dbReference>
<proteinExistence type="evidence at protein level"/>
<accession>Q188R7</accession>
<organism>
    <name type="scientific">Clostridioides difficile (strain 630)</name>
    <name type="common">Peptoclostridium difficile</name>
    <dbReference type="NCBI Taxonomy" id="272563"/>
    <lineage>
        <taxon>Bacteria</taxon>
        <taxon>Bacillati</taxon>
        <taxon>Bacillota</taxon>
        <taxon>Clostridia</taxon>
        <taxon>Peptostreptococcales</taxon>
        <taxon>Peptostreptococcaceae</taxon>
        <taxon>Clostridioides</taxon>
    </lineage>
</organism>
<keyword id="KW-0004">4Fe-4S</keyword>
<keyword id="KW-0903">Direct protein sequencing</keyword>
<keyword id="KW-0285">Flavoprotein</keyword>
<keyword id="KW-0288">FMN</keyword>
<keyword id="KW-0408">Iron</keyword>
<keyword id="KW-0411">Iron-sulfur</keyword>
<keyword id="KW-0479">Metal-binding</keyword>
<keyword id="KW-1185">Reference proteome</keyword>
<feature type="chain" id="PRO_0000332941" description="Iron-sulfur flavoprotein CD630_04720">
    <location>
        <begin position="1"/>
        <end position="225"/>
    </location>
</feature>
<feature type="binding site" evidence="1">
    <location>
        <position position="49"/>
    </location>
    <ligand>
        <name>[4Fe-4S] cluster</name>
        <dbReference type="ChEBI" id="CHEBI:49883"/>
    </ligand>
</feature>
<feature type="binding site" evidence="1">
    <location>
        <position position="52"/>
    </location>
    <ligand>
        <name>[4Fe-4S] cluster</name>
        <dbReference type="ChEBI" id="CHEBI:49883"/>
    </ligand>
</feature>
<feature type="binding site" evidence="1">
    <location>
        <position position="55"/>
    </location>
    <ligand>
        <name>[4Fe-4S] cluster</name>
        <dbReference type="ChEBI" id="CHEBI:49883"/>
    </ligand>
</feature>
<feature type="binding site" evidence="1">
    <location>
        <position position="61"/>
    </location>
    <ligand>
        <name>[4Fe-4S] cluster</name>
        <dbReference type="ChEBI" id="CHEBI:49883"/>
    </ligand>
</feature>
<reference key="1">
    <citation type="journal article" date="2006" name="Nat. Genet.">
        <title>The multidrug-resistant human pathogen Clostridium difficile has a highly mobile, mosaic genome.</title>
        <authorList>
            <person name="Sebaihia M."/>
            <person name="Wren B.W."/>
            <person name="Mullany P."/>
            <person name="Fairweather N.F."/>
            <person name="Minton N."/>
            <person name="Stabler R."/>
            <person name="Thomson N.R."/>
            <person name="Roberts A.P."/>
            <person name="Cerdeno-Tarraga A.M."/>
            <person name="Wang H."/>
            <person name="Holden M.T.G."/>
            <person name="Wright A."/>
            <person name="Churcher C."/>
            <person name="Quail M.A."/>
            <person name="Baker S."/>
            <person name="Bason N."/>
            <person name="Brooks K."/>
            <person name="Chillingworth T."/>
            <person name="Cronin A."/>
            <person name="Davis P."/>
            <person name="Dowd L."/>
            <person name="Fraser A."/>
            <person name="Feltwell T."/>
            <person name="Hance Z."/>
            <person name="Holroyd S."/>
            <person name="Jagels K."/>
            <person name="Moule S."/>
            <person name="Mungall K."/>
            <person name="Price C."/>
            <person name="Rabbinowitsch E."/>
            <person name="Sharp S."/>
            <person name="Simmonds M."/>
            <person name="Stevens K."/>
            <person name="Unwin L."/>
            <person name="Whithead S."/>
            <person name="Dupuy B."/>
            <person name="Dougan G."/>
            <person name="Barrell B."/>
            <person name="Parkhill J."/>
        </authorList>
    </citation>
    <scope>NUCLEOTIDE SEQUENCE [LARGE SCALE GENOMIC DNA]</scope>
    <source>
        <strain>630</strain>
    </source>
</reference>
<reference key="2">
    <citation type="journal article" date="2001" name="J. Bacteriol.">
        <title>Iron-sulfur flavoprotein (Isf) from Methanosarcina thermophila is the prototype of a widely distributed family.</title>
        <authorList>
            <person name="Zhao T."/>
            <person name="Cruz F."/>
            <person name="Ferry J.G."/>
        </authorList>
    </citation>
    <scope>PROTEIN SEQUENCE OF N-TERMINUS</scope>
    <scope>COFACTOR</scope>
    <scope>IRON-SULFUR CLUSTER</scope>
</reference>
<reference key="3">
    <citation type="journal article" date="2000" name="J. Bacteriol.">
        <title>Site-specific mutational analysis of a novel cysteine motif proposed to ligate the 4Fe-4S cluster in the iron-sulfur flavoprotein of the thermophilic methanoarchaeon Methanosarcina thermophila.</title>
        <authorList>
            <person name="Leartsakulpanich U."/>
            <person name="Antonkine M.L."/>
            <person name="Ferry J.G."/>
        </authorList>
    </citation>
    <scope>PROTEIN FAMILY</scope>
</reference>
<sequence>MIITVINGSPRKNGATSKVLTYLYKDIERLIPDVKINYFDLSEVNPSYCIGCLNCYKMGKCINQNDKVEYIHDIITKSDGVIFGSPTYGSSVTGLFKVFTDRAHMMLERLLYRKPCIAVTTYENARGSKAISFIKSMVLDSGGYVCGSLSIKTGFNQNPITEKVESKIQKVSKKFIYCIEEKKNPPVLSQIYNFIAINAVLKPMAFKDIEQYKGIIDRWEEQGII</sequence>
<protein>
    <recommendedName>
        <fullName>Iron-sulfur flavoprotein CD630_04720</fullName>
        <shortName>Isf</shortName>
    </recommendedName>
    <alternativeName>
        <fullName>Cd1</fullName>
        <shortName>CD</shortName>
    </alternativeName>
</protein>
<gene>
    <name type="ordered locus">CD630_04720</name>
</gene>
<name>ISF_CLOD6</name>
<evidence type="ECO:0000250" key="1"/>
<evidence type="ECO:0000269" key="2">
    <source>
    </source>
</evidence>
<evidence type="ECO:0000305" key="3"/>
<evidence type="ECO:0000305" key="4">
    <source>
    </source>
</evidence>
<comment type="function">
    <text>Redox-active protein probably involved in electron transport.</text>
</comment>
<comment type="cofactor">
    <cofactor evidence="2">
        <name>FMN</name>
        <dbReference type="ChEBI" id="CHEBI:58210"/>
    </cofactor>
    <text evidence="2">Binds 1 FMN per subunit.</text>
</comment>
<comment type="cofactor">
    <cofactor evidence="4">
        <name>[4Fe-4S] cluster</name>
        <dbReference type="ChEBI" id="CHEBI:49883"/>
    </cofactor>
    <text evidence="4">Binds 1 [4Fe-4S] cluster per subunit.</text>
</comment>
<comment type="subunit">
    <text>Homodimer.</text>
</comment>
<comment type="similarity">
    <text evidence="3">Belongs to the SsuE family. Isf subfamily.</text>
</comment>